<evidence type="ECO:0000250" key="1">
    <source>
        <dbReference type="UniProtKB" id="P62910"/>
    </source>
</evidence>
<evidence type="ECO:0000250" key="2">
    <source>
        <dbReference type="UniProtKB" id="P62911"/>
    </source>
</evidence>
<evidence type="ECO:0000305" key="3"/>
<reference key="1">
    <citation type="journal article" date="2005" name="Nature">
        <title>Genome sequence, comparative analysis and haplotype structure of the domestic dog.</title>
        <authorList>
            <person name="Lindblad-Toh K."/>
            <person name="Wade C.M."/>
            <person name="Mikkelsen T.S."/>
            <person name="Karlsson E.K."/>
            <person name="Jaffe D.B."/>
            <person name="Kamal M."/>
            <person name="Clamp M."/>
            <person name="Chang J.L."/>
            <person name="Kulbokas E.J. III"/>
            <person name="Zody M.C."/>
            <person name="Mauceli E."/>
            <person name="Xie X."/>
            <person name="Breen M."/>
            <person name="Wayne R.K."/>
            <person name="Ostrander E.A."/>
            <person name="Ponting C.P."/>
            <person name="Galibert F."/>
            <person name="Smith D.R."/>
            <person name="deJong P.J."/>
            <person name="Kirkness E.F."/>
            <person name="Alvarez P."/>
            <person name="Biagi T."/>
            <person name="Brockman W."/>
            <person name="Butler J."/>
            <person name="Chin C.-W."/>
            <person name="Cook A."/>
            <person name="Cuff J."/>
            <person name="Daly M.J."/>
            <person name="DeCaprio D."/>
            <person name="Gnerre S."/>
            <person name="Grabherr M."/>
            <person name="Kellis M."/>
            <person name="Kleber M."/>
            <person name="Bardeleben C."/>
            <person name="Goodstadt L."/>
            <person name="Heger A."/>
            <person name="Hitte C."/>
            <person name="Kim L."/>
            <person name="Koepfli K.-P."/>
            <person name="Parker H.G."/>
            <person name="Pollinger J.P."/>
            <person name="Searle S.M.J."/>
            <person name="Sutter N.B."/>
            <person name="Thomas R."/>
            <person name="Webber C."/>
            <person name="Baldwin J."/>
            <person name="Abebe A."/>
            <person name="Abouelleil A."/>
            <person name="Aftuck L."/>
            <person name="Ait-Zahra M."/>
            <person name="Aldredge T."/>
            <person name="Allen N."/>
            <person name="An P."/>
            <person name="Anderson S."/>
            <person name="Antoine C."/>
            <person name="Arachchi H."/>
            <person name="Aslam A."/>
            <person name="Ayotte L."/>
            <person name="Bachantsang P."/>
            <person name="Barry A."/>
            <person name="Bayul T."/>
            <person name="Benamara M."/>
            <person name="Berlin A."/>
            <person name="Bessette D."/>
            <person name="Blitshteyn B."/>
            <person name="Bloom T."/>
            <person name="Blye J."/>
            <person name="Boguslavskiy L."/>
            <person name="Bonnet C."/>
            <person name="Boukhgalter B."/>
            <person name="Brown A."/>
            <person name="Cahill P."/>
            <person name="Calixte N."/>
            <person name="Camarata J."/>
            <person name="Cheshatsang Y."/>
            <person name="Chu J."/>
            <person name="Citroen M."/>
            <person name="Collymore A."/>
            <person name="Cooke P."/>
            <person name="Dawoe T."/>
            <person name="Daza R."/>
            <person name="Decktor K."/>
            <person name="DeGray S."/>
            <person name="Dhargay N."/>
            <person name="Dooley K."/>
            <person name="Dooley K."/>
            <person name="Dorje P."/>
            <person name="Dorjee K."/>
            <person name="Dorris L."/>
            <person name="Duffey N."/>
            <person name="Dupes A."/>
            <person name="Egbiremolen O."/>
            <person name="Elong R."/>
            <person name="Falk J."/>
            <person name="Farina A."/>
            <person name="Faro S."/>
            <person name="Ferguson D."/>
            <person name="Ferreira P."/>
            <person name="Fisher S."/>
            <person name="FitzGerald M."/>
            <person name="Foley K."/>
            <person name="Foley C."/>
            <person name="Franke A."/>
            <person name="Friedrich D."/>
            <person name="Gage D."/>
            <person name="Garber M."/>
            <person name="Gearin G."/>
            <person name="Giannoukos G."/>
            <person name="Goode T."/>
            <person name="Goyette A."/>
            <person name="Graham J."/>
            <person name="Grandbois E."/>
            <person name="Gyaltsen K."/>
            <person name="Hafez N."/>
            <person name="Hagopian D."/>
            <person name="Hagos B."/>
            <person name="Hall J."/>
            <person name="Healy C."/>
            <person name="Hegarty R."/>
            <person name="Honan T."/>
            <person name="Horn A."/>
            <person name="Houde N."/>
            <person name="Hughes L."/>
            <person name="Hunnicutt L."/>
            <person name="Husby M."/>
            <person name="Jester B."/>
            <person name="Jones C."/>
            <person name="Kamat A."/>
            <person name="Kanga B."/>
            <person name="Kells C."/>
            <person name="Khazanovich D."/>
            <person name="Kieu A.C."/>
            <person name="Kisner P."/>
            <person name="Kumar M."/>
            <person name="Lance K."/>
            <person name="Landers T."/>
            <person name="Lara M."/>
            <person name="Lee W."/>
            <person name="Leger J.-P."/>
            <person name="Lennon N."/>
            <person name="Leuper L."/>
            <person name="LeVine S."/>
            <person name="Liu J."/>
            <person name="Liu X."/>
            <person name="Lokyitsang Y."/>
            <person name="Lokyitsang T."/>
            <person name="Lui A."/>
            <person name="Macdonald J."/>
            <person name="Major J."/>
            <person name="Marabella R."/>
            <person name="Maru K."/>
            <person name="Matthews C."/>
            <person name="McDonough S."/>
            <person name="Mehta T."/>
            <person name="Meldrim J."/>
            <person name="Melnikov A."/>
            <person name="Meneus L."/>
            <person name="Mihalev A."/>
            <person name="Mihova T."/>
            <person name="Miller K."/>
            <person name="Mittelman R."/>
            <person name="Mlenga V."/>
            <person name="Mulrain L."/>
            <person name="Munson G."/>
            <person name="Navidi A."/>
            <person name="Naylor J."/>
            <person name="Nguyen T."/>
            <person name="Nguyen N."/>
            <person name="Nguyen C."/>
            <person name="Nguyen T."/>
            <person name="Nicol R."/>
            <person name="Norbu N."/>
            <person name="Norbu C."/>
            <person name="Novod N."/>
            <person name="Nyima T."/>
            <person name="Olandt P."/>
            <person name="O'Neill B."/>
            <person name="O'Neill K."/>
            <person name="Osman S."/>
            <person name="Oyono L."/>
            <person name="Patti C."/>
            <person name="Perrin D."/>
            <person name="Phunkhang P."/>
            <person name="Pierre F."/>
            <person name="Priest M."/>
            <person name="Rachupka A."/>
            <person name="Raghuraman S."/>
            <person name="Rameau R."/>
            <person name="Ray V."/>
            <person name="Raymond C."/>
            <person name="Rege F."/>
            <person name="Rise C."/>
            <person name="Rogers J."/>
            <person name="Rogov P."/>
            <person name="Sahalie J."/>
            <person name="Settipalli S."/>
            <person name="Sharpe T."/>
            <person name="Shea T."/>
            <person name="Sheehan M."/>
            <person name="Sherpa N."/>
            <person name="Shi J."/>
            <person name="Shih D."/>
            <person name="Sloan J."/>
            <person name="Smith C."/>
            <person name="Sparrow T."/>
            <person name="Stalker J."/>
            <person name="Stange-Thomann N."/>
            <person name="Stavropoulos S."/>
            <person name="Stone C."/>
            <person name="Stone S."/>
            <person name="Sykes S."/>
            <person name="Tchuinga P."/>
            <person name="Tenzing P."/>
            <person name="Tesfaye S."/>
            <person name="Thoulutsang D."/>
            <person name="Thoulutsang Y."/>
            <person name="Topham K."/>
            <person name="Topping I."/>
            <person name="Tsamla T."/>
            <person name="Vassiliev H."/>
            <person name="Venkataraman V."/>
            <person name="Vo A."/>
            <person name="Wangchuk T."/>
            <person name="Wangdi T."/>
            <person name="Weiand M."/>
            <person name="Wilkinson J."/>
            <person name="Wilson A."/>
            <person name="Yadav S."/>
            <person name="Yang S."/>
            <person name="Yang X."/>
            <person name="Young G."/>
            <person name="Yu Q."/>
            <person name="Zainoun J."/>
            <person name="Zembek L."/>
            <person name="Zimmer A."/>
            <person name="Lander E.S."/>
        </authorList>
    </citation>
    <scope>NUCLEOTIDE SEQUENCE [LARGE SCALE GENOMIC DNA]</scope>
    <source>
        <strain>Boxer</strain>
    </source>
</reference>
<reference key="2">
    <citation type="journal article" date="2008" name="Structure">
        <title>Structure of the mammalian 80S ribosome at 8.7 A resolution.</title>
        <authorList>
            <person name="Chandramouli P."/>
            <person name="Topf M."/>
            <person name="Menetret J.F."/>
            <person name="Eswar N."/>
            <person name="Cannone J.J."/>
            <person name="Gutell R.R."/>
            <person name="Sali A."/>
            <person name="Akey C.W."/>
        </authorList>
    </citation>
    <scope>STRUCTURE BY ELECTRON MICROSCOPY (8.70 ANGSTROMS)</scope>
</reference>
<proteinExistence type="evidence at protein level"/>
<sequence>MAALRPLVKPKIVKKRTKKFIRHQSDRYVKIKRNWRKPRGIDNRVRRRFKGQILMPNIGYGSNKKTKHMLPSGFRKFLVHNVKELEVLLMCNKSYCAEIAHNVSSKNRKAIVERAAQLAIRVTNPNARLRSEENE</sequence>
<gene>
    <name type="primary">RPL32</name>
</gene>
<name>RL32_CANLF</name>
<feature type="chain" id="PRO_0000405591" description="Large ribosomal subunit protein eL32">
    <location>
        <begin position="1"/>
        <end position="135"/>
    </location>
</feature>
<feature type="modified residue" description="N6-succinyllysine" evidence="2">
    <location>
        <position position="50"/>
    </location>
</feature>
<feature type="modified residue" description="Phosphoserine" evidence="1">
    <location>
        <position position="62"/>
    </location>
</feature>
<feature type="cross-link" description="Glycyl lysine isopeptide (Lys-Gly) (interchain with G-Cter in SUMO2)" evidence="1">
    <location>
        <position position="9"/>
    </location>
</feature>
<organism>
    <name type="scientific">Canis lupus familiaris</name>
    <name type="common">Dog</name>
    <name type="synonym">Canis familiaris</name>
    <dbReference type="NCBI Taxonomy" id="9615"/>
    <lineage>
        <taxon>Eukaryota</taxon>
        <taxon>Metazoa</taxon>
        <taxon>Chordata</taxon>
        <taxon>Craniata</taxon>
        <taxon>Vertebrata</taxon>
        <taxon>Euteleostomi</taxon>
        <taxon>Mammalia</taxon>
        <taxon>Eutheria</taxon>
        <taxon>Laurasiatheria</taxon>
        <taxon>Carnivora</taxon>
        <taxon>Caniformia</taxon>
        <taxon>Canidae</taxon>
        <taxon>Canis</taxon>
    </lineage>
</organism>
<dbReference type="RefSeq" id="NP_001239098.1">
    <property type="nucleotide sequence ID" value="NM_001252169.1"/>
</dbReference>
<dbReference type="PDB" id="4V5Z">
    <property type="method" value="EM"/>
    <property type="resolution" value="8.70 A"/>
    <property type="chains" value="9=68-125, y=1-135"/>
</dbReference>
<dbReference type="PDBsum" id="4V5Z"/>
<dbReference type="SMR" id="E2RKA8"/>
<dbReference type="FunCoup" id="E2RKA8">
    <property type="interactions" value="2378"/>
</dbReference>
<dbReference type="STRING" id="9615.ENSCAFP00000031693"/>
<dbReference type="PaxDb" id="9612-ENSCAFP00000031693"/>
<dbReference type="Ensembl" id="ENSCAFT00000078445.2">
    <property type="protein sequence ID" value="ENSCAFP00000057266.1"/>
    <property type="gene ID" value="ENSCAFG00000017346.3"/>
</dbReference>
<dbReference type="Ensembl" id="ENSCAFT00030041695.1">
    <property type="protein sequence ID" value="ENSCAFP00030036378.1"/>
    <property type="gene ID" value="ENSCAFG00030022674.1"/>
</dbReference>
<dbReference type="Ensembl" id="ENSCAFT00040040271.1">
    <property type="protein sequence ID" value="ENSCAFP00040035143.1"/>
    <property type="gene ID" value="ENSCAFG00040021699.1"/>
</dbReference>
<dbReference type="Ensembl" id="ENSCAFT00845050220.1">
    <property type="protein sequence ID" value="ENSCAFP00845039375.1"/>
    <property type="gene ID" value="ENSCAFG00845028446.1"/>
</dbReference>
<dbReference type="GeneID" id="607481"/>
<dbReference type="KEGG" id="cfa:607481"/>
<dbReference type="CTD" id="6161"/>
<dbReference type="VEuPathDB" id="HostDB:ENSCAFG00845028446"/>
<dbReference type="eggNOG" id="KOG0878">
    <property type="taxonomic scope" value="Eukaryota"/>
</dbReference>
<dbReference type="GeneTree" id="ENSGT00940000153973"/>
<dbReference type="HOGENOM" id="CLU_071479_4_1_1"/>
<dbReference type="InParanoid" id="E2RKA8"/>
<dbReference type="OMA" id="HPSGYEE"/>
<dbReference type="OrthoDB" id="9737228at2759"/>
<dbReference type="Reactome" id="R-CFA-156827">
    <property type="pathway name" value="L13a-mediated translational silencing of Ceruloplasmin expression"/>
</dbReference>
<dbReference type="Reactome" id="R-CFA-1799339">
    <property type="pathway name" value="SRP-dependent cotranslational protein targeting to membrane"/>
</dbReference>
<dbReference type="Reactome" id="R-CFA-6791226">
    <property type="pathway name" value="Major pathway of rRNA processing in the nucleolus and cytosol"/>
</dbReference>
<dbReference type="Reactome" id="R-CFA-72689">
    <property type="pathway name" value="Formation of a pool of free 40S subunits"/>
</dbReference>
<dbReference type="Reactome" id="R-CFA-72706">
    <property type="pathway name" value="GTP hydrolysis and joining of the 60S ribosomal subunit"/>
</dbReference>
<dbReference type="Reactome" id="R-CFA-975956">
    <property type="pathway name" value="Nonsense Mediated Decay (NMD) independent of the Exon Junction Complex (EJC)"/>
</dbReference>
<dbReference type="Reactome" id="R-CFA-975957">
    <property type="pathway name" value="Nonsense Mediated Decay (NMD) enhanced by the Exon Junction Complex (EJC)"/>
</dbReference>
<dbReference type="Proteomes" id="UP000002254">
    <property type="component" value="Chromosome 20"/>
</dbReference>
<dbReference type="Proteomes" id="UP000694429">
    <property type="component" value="Chromosome 20"/>
</dbReference>
<dbReference type="Proteomes" id="UP000694542">
    <property type="component" value="Chromosome 20"/>
</dbReference>
<dbReference type="Proteomes" id="UP000805418">
    <property type="component" value="Chromosome 20"/>
</dbReference>
<dbReference type="Bgee" id="ENSCAFG00000017346">
    <property type="expression patterns" value="Expressed in mammary gland and 46 other cell types or tissues"/>
</dbReference>
<dbReference type="GO" id="GO:0022625">
    <property type="term" value="C:cytosolic large ribosomal subunit"/>
    <property type="evidence" value="ECO:0000318"/>
    <property type="project" value="GO_Central"/>
</dbReference>
<dbReference type="GO" id="GO:0003735">
    <property type="term" value="F:structural constituent of ribosome"/>
    <property type="evidence" value="ECO:0007669"/>
    <property type="project" value="InterPro"/>
</dbReference>
<dbReference type="GO" id="GO:0006412">
    <property type="term" value="P:translation"/>
    <property type="evidence" value="ECO:0007669"/>
    <property type="project" value="InterPro"/>
</dbReference>
<dbReference type="CDD" id="cd00513">
    <property type="entry name" value="Ribosomal_L32_L32e"/>
    <property type="match status" value="1"/>
</dbReference>
<dbReference type="InterPro" id="IPR001515">
    <property type="entry name" value="Ribosomal_eL32"/>
</dbReference>
<dbReference type="InterPro" id="IPR018263">
    <property type="entry name" value="Ribosomal_eL32_CS"/>
</dbReference>
<dbReference type="InterPro" id="IPR036351">
    <property type="entry name" value="Ribosomal_eL32_sf"/>
</dbReference>
<dbReference type="PANTHER" id="PTHR23413">
    <property type="entry name" value="60S RIBOSOMAL PROTEIN L32 AND DNA-DIRECTED RNA POLYMERASE II, SUBUNIT N"/>
    <property type="match status" value="1"/>
</dbReference>
<dbReference type="PANTHER" id="PTHR23413:SF6">
    <property type="entry name" value="LARGE RIBOSOMAL SUBUNIT PROTEIN EL32"/>
    <property type="match status" value="1"/>
</dbReference>
<dbReference type="Pfam" id="PF01655">
    <property type="entry name" value="Ribosomal_L32e"/>
    <property type="match status" value="1"/>
</dbReference>
<dbReference type="SMART" id="SM01393">
    <property type="entry name" value="Ribosomal_L32e"/>
    <property type="match status" value="1"/>
</dbReference>
<dbReference type="SUPFAM" id="SSF52042">
    <property type="entry name" value="Ribosomal protein L32e"/>
    <property type="match status" value="1"/>
</dbReference>
<dbReference type="PROSITE" id="PS00580">
    <property type="entry name" value="RIBOSOMAL_L32E"/>
    <property type="match status" value="1"/>
</dbReference>
<comment type="function">
    <text evidence="1">Component of the large ribosomal subunit. The ribosome is a large ribonucleoprotein complex responsible for the synthesis of proteins in the cell.</text>
</comment>
<comment type="subunit">
    <text evidence="1">Component of the large ribosomal subunit.</text>
</comment>
<comment type="subcellular location">
    <subcellularLocation>
        <location evidence="1">Cytoplasm</location>
    </subcellularLocation>
</comment>
<comment type="similarity">
    <text evidence="3">Belongs to the eukaryotic ribosomal protein eL32 family.</text>
</comment>
<protein>
    <recommendedName>
        <fullName evidence="3">Large ribosomal subunit protein eL32</fullName>
    </recommendedName>
    <alternativeName>
        <fullName>60S ribosomal protein L32</fullName>
    </alternativeName>
</protein>
<keyword id="KW-0002">3D-structure</keyword>
<keyword id="KW-0963">Cytoplasm</keyword>
<keyword id="KW-1017">Isopeptide bond</keyword>
<keyword id="KW-0597">Phosphoprotein</keyword>
<keyword id="KW-1185">Reference proteome</keyword>
<keyword id="KW-0687">Ribonucleoprotein</keyword>
<keyword id="KW-0689">Ribosomal protein</keyword>
<keyword id="KW-0832">Ubl conjugation</keyword>
<accession>E2RKA8</accession>